<proteinExistence type="evidence at protein level"/>
<dbReference type="EMBL" id="Y14591">
    <property type="protein sequence ID" value="CAA74933.1"/>
    <property type="molecule type" value="mRNA"/>
</dbReference>
<dbReference type="EMBL" id="EF120357">
    <property type="protein sequence ID" value="ABL98073.1"/>
    <property type="molecule type" value="mRNA"/>
</dbReference>
<dbReference type="CCDS" id="CCDS32830.1"/>
<dbReference type="RefSeq" id="NP_001034449.1">
    <property type="nucleotide sequence ID" value="NM_001039360.3"/>
</dbReference>
<dbReference type="RefSeq" id="NP_001305770.1">
    <property type="nucleotide sequence ID" value="NM_001318841.2"/>
</dbReference>
<dbReference type="RefSeq" id="NP_001358213.1">
    <property type="nucleotide sequence ID" value="NM_001371284.1"/>
</dbReference>
<dbReference type="RefSeq" id="NP_001358214.1">
    <property type="nucleotide sequence ID" value="NM_001371285.1"/>
</dbReference>
<dbReference type="RefSeq" id="NP_001358215.1">
    <property type="nucleotide sequence ID" value="NM_001371286.1"/>
</dbReference>
<dbReference type="RefSeq" id="NP_001358216.1">
    <property type="nucleotide sequence ID" value="NM_001371287.1"/>
</dbReference>
<dbReference type="RefSeq" id="NP_001358217.1">
    <property type="nucleotide sequence ID" value="NM_001371288.1"/>
</dbReference>
<dbReference type="RefSeq" id="NP_001358219.1">
    <property type="nucleotide sequence ID" value="NM_001371290.1"/>
</dbReference>
<dbReference type="RefSeq" id="NP_001358220.1">
    <property type="nucleotide sequence ID" value="NM_001371291.1"/>
</dbReference>
<dbReference type="RefSeq" id="XP_005258286.1">
    <property type="nucleotide sequence ID" value="XM_005258229.4"/>
</dbReference>
<dbReference type="RefSeq" id="XP_011524172.1">
    <property type="nucleotide sequence ID" value="XM_011525870.2"/>
</dbReference>
<dbReference type="RefSeq" id="XP_011524173.1">
    <property type="nucleotide sequence ID" value="XM_011525871.2"/>
</dbReference>
<dbReference type="RefSeq" id="XP_016881098.1">
    <property type="nucleotide sequence ID" value="XM_017025609.3"/>
</dbReference>
<dbReference type="RefSeq" id="XP_054174256.1">
    <property type="nucleotide sequence ID" value="XM_054318281.1"/>
</dbReference>
<dbReference type="SMR" id="A1YPR0"/>
<dbReference type="BioGRID" id="128390">
    <property type="interactions" value="29"/>
</dbReference>
<dbReference type="DIP" id="DIP-61583N"/>
<dbReference type="FunCoup" id="A1YPR0">
    <property type="interactions" value="41"/>
</dbReference>
<dbReference type="IntAct" id="A1YPR0">
    <property type="interactions" value="12"/>
</dbReference>
<dbReference type="MINT" id="A1YPR0"/>
<dbReference type="STRING" id="9606.ENSP00000468782"/>
<dbReference type="iPTMnet" id="A1YPR0"/>
<dbReference type="PhosphoSitePlus" id="A1YPR0"/>
<dbReference type="BioMuta" id="ZBTB7C"/>
<dbReference type="jPOST" id="A1YPR0"/>
<dbReference type="MassIVE" id="A1YPR0"/>
<dbReference type="PaxDb" id="9606-ENSP00000468782"/>
<dbReference type="PeptideAtlas" id="A1YPR0"/>
<dbReference type="ProteomicsDB" id="162"/>
<dbReference type="Antibodypedia" id="2877">
    <property type="antibodies" value="76 antibodies from 16 providers"/>
</dbReference>
<dbReference type="DNASU" id="201501"/>
<dbReference type="Ensembl" id="ENST00000535628.6">
    <property type="protein sequence ID" value="ENSP00000439781.1"/>
    <property type="gene ID" value="ENSG00000184828.10"/>
</dbReference>
<dbReference type="Ensembl" id="ENST00000586438.5">
    <property type="protein sequence ID" value="ENSP00000468254.1"/>
    <property type="gene ID" value="ENSG00000184828.10"/>
</dbReference>
<dbReference type="Ensembl" id="ENST00000588982.5">
    <property type="protein sequence ID" value="ENSP00000468782.1"/>
    <property type="gene ID" value="ENSG00000184828.10"/>
</dbReference>
<dbReference type="Ensembl" id="ENST00000590800.6">
    <property type="protein sequence ID" value="ENSP00000467877.1"/>
    <property type="gene ID" value="ENSG00000184828.10"/>
</dbReference>
<dbReference type="GeneID" id="201501"/>
<dbReference type="KEGG" id="hsa:201501"/>
<dbReference type="MANE-Select" id="ENST00000590800.6">
    <property type="protein sequence ID" value="ENSP00000467877.1"/>
    <property type="RefSeq nucleotide sequence ID" value="NM_001318841.2"/>
    <property type="RefSeq protein sequence ID" value="NP_001305770.1"/>
</dbReference>
<dbReference type="AGR" id="HGNC:31700"/>
<dbReference type="CTD" id="201501"/>
<dbReference type="DisGeNET" id="201501"/>
<dbReference type="GeneCards" id="ZBTB7C"/>
<dbReference type="HGNC" id="HGNC:31700">
    <property type="gene designation" value="ZBTB7C"/>
</dbReference>
<dbReference type="HPA" id="ENSG00000184828">
    <property type="expression patterns" value="Tissue enhanced (esophagus)"/>
</dbReference>
<dbReference type="MIM" id="616591">
    <property type="type" value="gene"/>
</dbReference>
<dbReference type="neXtProt" id="NX_A1YPR0"/>
<dbReference type="OpenTargets" id="ENSG00000184828"/>
<dbReference type="PharmGKB" id="PA134861865"/>
<dbReference type="VEuPathDB" id="HostDB:ENSG00000184828"/>
<dbReference type="eggNOG" id="KOG1721">
    <property type="taxonomic scope" value="Eukaryota"/>
</dbReference>
<dbReference type="GeneTree" id="ENSGT00940000159814"/>
<dbReference type="HOGENOM" id="CLU_025627_2_0_1"/>
<dbReference type="InParanoid" id="A1YPR0"/>
<dbReference type="OMA" id="HLDMERN"/>
<dbReference type="OrthoDB" id="8922241at2759"/>
<dbReference type="PAN-GO" id="A1YPR0">
    <property type="GO annotations" value="3 GO annotations based on evolutionary models"/>
</dbReference>
<dbReference type="PhylomeDB" id="A1YPR0"/>
<dbReference type="TreeFam" id="TF331824"/>
<dbReference type="PathwayCommons" id="A1YPR0"/>
<dbReference type="SignaLink" id="A1YPR0"/>
<dbReference type="BioGRID-ORCS" id="201501">
    <property type="hits" value="11 hits in 1211 CRISPR screens"/>
</dbReference>
<dbReference type="ChiTaRS" id="ZBTB7C">
    <property type="organism name" value="human"/>
</dbReference>
<dbReference type="GenomeRNAi" id="201501"/>
<dbReference type="Pharos" id="A1YPR0">
    <property type="development level" value="Tbio"/>
</dbReference>
<dbReference type="PRO" id="PR:A1YPR0"/>
<dbReference type="Proteomes" id="UP000005640">
    <property type="component" value="Chromosome 18"/>
</dbReference>
<dbReference type="RNAct" id="A1YPR0">
    <property type="molecule type" value="protein"/>
</dbReference>
<dbReference type="Bgee" id="ENSG00000184828">
    <property type="expression patterns" value="Expressed in mammalian vulva and 140 other cell types or tissues"/>
</dbReference>
<dbReference type="ExpressionAtlas" id="A1YPR0">
    <property type="expression patterns" value="baseline and differential"/>
</dbReference>
<dbReference type="GO" id="GO:0005634">
    <property type="term" value="C:nucleus"/>
    <property type="evidence" value="ECO:0007669"/>
    <property type="project" value="Ensembl"/>
</dbReference>
<dbReference type="GO" id="GO:0000981">
    <property type="term" value="F:DNA-binding transcription factor activity, RNA polymerase II-specific"/>
    <property type="evidence" value="ECO:0000318"/>
    <property type="project" value="GO_Central"/>
</dbReference>
<dbReference type="GO" id="GO:0000978">
    <property type="term" value="F:RNA polymerase II cis-regulatory region sequence-specific DNA binding"/>
    <property type="evidence" value="ECO:0000318"/>
    <property type="project" value="GO_Central"/>
</dbReference>
<dbReference type="GO" id="GO:0008270">
    <property type="term" value="F:zinc ion binding"/>
    <property type="evidence" value="ECO:0007669"/>
    <property type="project" value="UniProtKB-KW"/>
</dbReference>
<dbReference type="GO" id="GO:0008285">
    <property type="term" value="P:negative regulation of cell population proliferation"/>
    <property type="evidence" value="ECO:0000314"/>
    <property type="project" value="UniProtKB"/>
</dbReference>
<dbReference type="GO" id="GO:0045600">
    <property type="term" value="P:positive regulation of fat cell differentiation"/>
    <property type="evidence" value="ECO:0007669"/>
    <property type="project" value="Ensembl"/>
</dbReference>
<dbReference type="GO" id="GO:0045944">
    <property type="term" value="P:positive regulation of transcription by RNA polymerase II"/>
    <property type="evidence" value="ECO:0007669"/>
    <property type="project" value="Ensembl"/>
</dbReference>
<dbReference type="GO" id="GO:0006357">
    <property type="term" value="P:regulation of transcription by RNA polymerase II"/>
    <property type="evidence" value="ECO:0000318"/>
    <property type="project" value="GO_Central"/>
</dbReference>
<dbReference type="CDD" id="cd18328">
    <property type="entry name" value="BTB_POZ_ZBTB7C_ZBTB36"/>
    <property type="match status" value="1"/>
</dbReference>
<dbReference type="FunFam" id="3.30.710.10:FF:000043">
    <property type="entry name" value="Zinc finger and BTB domain containing 7A"/>
    <property type="match status" value="1"/>
</dbReference>
<dbReference type="FunFam" id="3.30.160.60:FF:000115">
    <property type="entry name" value="Zinc finger and BTB domain containing 7C"/>
    <property type="match status" value="1"/>
</dbReference>
<dbReference type="FunFam" id="3.30.160.60:FF:000138">
    <property type="entry name" value="Zinc finger and BTB domain containing 7C"/>
    <property type="match status" value="1"/>
</dbReference>
<dbReference type="FunFam" id="3.30.160.60:FF:000259">
    <property type="entry name" value="Zinc finger and BTB domain containing 7C"/>
    <property type="match status" value="1"/>
</dbReference>
<dbReference type="FunFam" id="3.30.160.60:FF:000572">
    <property type="entry name" value="Zinc finger and BTB domain containing 7C"/>
    <property type="match status" value="1"/>
</dbReference>
<dbReference type="Gene3D" id="3.30.160.60">
    <property type="entry name" value="Classic Zinc Finger"/>
    <property type="match status" value="4"/>
</dbReference>
<dbReference type="Gene3D" id="3.30.710.10">
    <property type="entry name" value="Potassium Channel Kv1.1, Chain A"/>
    <property type="match status" value="1"/>
</dbReference>
<dbReference type="InterPro" id="IPR016024">
    <property type="entry name" value="ARM-type_fold"/>
</dbReference>
<dbReference type="InterPro" id="IPR000210">
    <property type="entry name" value="BTB/POZ_dom"/>
</dbReference>
<dbReference type="InterPro" id="IPR011333">
    <property type="entry name" value="SKP1/BTB/POZ_sf"/>
</dbReference>
<dbReference type="InterPro" id="IPR036236">
    <property type="entry name" value="Znf_C2H2_sf"/>
</dbReference>
<dbReference type="InterPro" id="IPR013087">
    <property type="entry name" value="Znf_C2H2_type"/>
</dbReference>
<dbReference type="InterPro" id="IPR050457">
    <property type="entry name" value="ZnFinger_BTB_dom_contain"/>
</dbReference>
<dbReference type="PANTHER" id="PTHR46105">
    <property type="entry name" value="AGAP004733-PA"/>
    <property type="match status" value="1"/>
</dbReference>
<dbReference type="PANTHER" id="PTHR46105:SF7">
    <property type="entry name" value="ZINC FINGER AND BTB DOMAIN-CONTAINING PROTEIN 7C"/>
    <property type="match status" value="1"/>
</dbReference>
<dbReference type="Pfam" id="PF00651">
    <property type="entry name" value="BTB"/>
    <property type="match status" value="1"/>
</dbReference>
<dbReference type="Pfam" id="PF00096">
    <property type="entry name" value="zf-C2H2"/>
    <property type="match status" value="2"/>
</dbReference>
<dbReference type="SMART" id="SM00225">
    <property type="entry name" value="BTB"/>
    <property type="match status" value="1"/>
</dbReference>
<dbReference type="SMART" id="SM00355">
    <property type="entry name" value="ZnF_C2H2"/>
    <property type="match status" value="4"/>
</dbReference>
<dbReference type="SUPFAM" id="SSF48371">
    <property type="entry name" value="ARM repeat"/>
    <property type="match status" value="1"/>
</dbReference>
<dbReference type="SUPFAM" id="SSF57667">
    <property type="entry name" value="beta-beta-alpha zinc fingers"/>
    <property type="match status" value="2"/>
</dbReference>
<dbReference type="SUPFAM" id="SSF54695">
    <property type="entry name" value="POZ domain"/>
    <property type="match status" value="1"/>
</dbReference>
<dbReference type="PROSITE" id="PS50097">
    <property type="entry name" value="BTB"/>
    <property type="match status" value="1"/>
</dbReference>
<dbReference type="PROSITE" id="PS00028">
    <property type="entry name" value="ZINC_FINGER_C2H2_1"/>
    <property type="match status" value="3"/>
</dbReference>
<dbReference type="PROSITE" id="PS50157">
    <property type="entry name" value="ZINC_FINGER_C2H2_2"/>
    <property type="match status" value="4"/>
</dbReference>
<evidence type="ECO:0000255" key="1">
    <source>
        <dbReference type="PROSITE-ProRule" id="PRU00037"/>
    </source>
</evidence>
<evidence type="ECO:0000255" key="2">
    <source>
        <dbReference type="PROSITE-ProRule" id="PRU00042"/>
    </source>
</evidence>
<evidence type="ECO:0000256" key="3">
    <source>
        <dbReference type="SAM" id="MobiDB-lite"/>
    </source>
</evidence>
<evidence type="ECO:0000269" key="4">
    <source>
    </source>
</evidence>
<protein>
    <recommendedName>
        <fullName>Zinc finger and BTB domain-containing protein 7C</fullName>
    </recommendedName>
    <alternativeName>
        <fullName>Affected by papillomavirus DNA integration in ME180 cells protein 1</fullName>
        <shortName>APM-1</shortName>
    </alternativeName>
    <alternativeName>
        <fullName>Zinc finger and BTB domain-containing protein 36</fullName>
    </alternativeName>
    <alternativeName>
        <fullName>Zinc finger protein 857C</fullName>
    </alternativeName>
</protein>
<reference key="1">
    <citation type="journal article" date="1998" name="EMBO J.">
        <title>APM-1, a novel human gene, identified by aberrant co-transcription with papillomavirus oncogenes in a cervical carcinoma cell line, encodes a BTB/POZ-zinc finger protein with growth inhibitory activity.</title>
        <authorList>
            <person name="Reuter S."/>
            <person name="Bartelmann M."/>
            <person name="Vogt M."/>
            <person name="Geisen C."/>
            <person name="Napierski I."/>
            <person name="Kahn T."/>
            <person name="Delius H."/>
            <person name="Lichter P."/>
            <person name="Weitz S."/>
            <person name="Korn B."/>
            <person name="Schwarz E."/>
        </authorList>
    </citation>
    <scope>NUCLEOTIDE SEQUENCE [MRNA]</scope>
    <scope>FUNCTION</scope>
    <scope>TISSUE SPECIFICITY</scope>
</reference>
<reference key="2">
    <citation type="submission" date="2006-11" db="EMBL/GenBank/DDBJ databases">
        <title>ZBTB7C.</title>
        <authorList>
            <person name="Gilling M."/>
            <person name="Ullmann R."/>
            <person name="Kristoffersson U."/>
            <person name="Moller M."/>
            <person name="Friis-Henriksen K."/>
            <person name="Bugge M."/>
            <person name="Tumer Z."/>
            <person name="Tommerup N."/>
        </authorList>
    </citation>
    <scope>NUCLEOTIDE SEQUENCE [MRNA]</scope>
</reference>
<gene>
    <name type="primary">ZBTB7C</name>
    <name type="synonym">APM1</name>
    <name type="synonym">ZBTB36</name>
    <name type="synonym">ZNF857C</name>
</gene>
<comment type="function">
    <text evidence="4">May be a tumor suppressor gene.</text>
</comment>
<comment type="tissue specificity">
    <text evidence="4">Detected in normal cervical keratinocytes, and in some cervical carcinoma cell lines.</text>
</comment>
<keyword id="KW-0479">Metal-binding</keyword>
<keyword id="KW-1267">Proteomics identification</keyword>
<keyword id="KW-1185">Reference proteome</keyword>
<keyword id="KW-0677">Repeat</keyword>
<keyword id="KW-0043">Tumor suppressor</keyword>
<keyword id="KW-0862">Zinc</keyword>
<keyword id="KW-0863">Zinc-finger</keyword>
<accession>A1YPR0</accession>
<accession>O73453</accession>
<sequence>MANDIDELIGIPFPNHSSEVLCSLNEQRHDGLLCDVLLVVQEQEYRTHRSVLAACSKYFKKLFTAGTLASQPYVYEIDFVQPEALAAILEFAYTSTLTITAGNVKHILNAARMLEIQCIVNVCLEIMEPGGDGGEEDDKEDDDDDEDDDDEEDEEEEEEEEEDDDDDTEDFADQENLPDPQDISCHQSPSKTDHLTEKAYSDTPRDFPDSFQAGSPGHLGVIRDFSIESLLRENLYPKANIPDRRPSLSPFAPDFFPHLWPGDFGAFAQLPEQPMDSGPLDLVIKNRKIKEEEKEELPPPPPPPFPNDFFKDMFPDLPGGPLGPIKAENDYGAYLNFLSATHLGGLFPPWPLVEERKLKPKASQQCPICHKVIMGAGKLPRHMRTHTGEKPYMCTICEVRFTRQDKLKIHMRKHTGERPYLCIHCNAKFVHNYDLKNHMRIHTGVRPYQCEFCYKSFTRSDHLHRHIKRQSCRMARPRRGRKPAAWRAASLLFGPGGPAPDKAAFVMPPALGEVGGHLGGAAVCLPGPSPAKHFLAAPKGALSLQELERQFEETQMKLFGRAQLEAERNAGGLLAFALAENVAAARPYFPLPDPWAAGLAGLPGLAGLNHVASMSEANN</sequence>
<feature type="chain" id="PRO_0000337869" description="Zinc finger and BTB domain-containing protein 7C">
    <location>
        <begin position="1"/>
        <end position="619"/>
    </location>
</feature>
<feature type="domain" description="BTB" evidence="1">
    <location>
        <begin position="34"/>
        <end position="101"/>
    </location>
</feature>
<feature type="zinc finger region" description="C2H2-type 1" evidence="2">
    <location>
        <begin position="364"/>
        <end position="386"/>
    </location>
</feature>
<feature type="zinc finger region" description="C2H2-type 2" evidence="2">
    <location>
        <begin position="392"/>
        <end position="414"/>
    </location>
</feature>
<feature type="zinc finger region" description="C2H2-type 3" evidence="2">
    <location>
        <begin position="420"/>
        <end position="442"/>
    </location>
</feature>
<feature type="zinc finger region" description="C2H2-type 4; degenerate" evidence="2">
    <location>
        <begin position="448"/>
        <end position="478"/>
    </location>
</feature>
<feature type="region of interest" description="Disordered" evidence="3">
    <location>
        <begin position="129"/>
        <end position="218"/>
    </location>
</feature>
<feature type="compositionally biased region" description="Acidic residues" evidence="3">
    <location>
        <begin position="133"/>
        <end position="173"/>
    </location>
</feature>
<feature type="compositionally biased region" description="Basic and acidic residues" evidence="3">
    <location>
        <begin position="191"/>
        <end position="208"/>
    </location>
</feature>
<name>ZBT7C_HUMAN</name>
<organism>
    <name type="scientific">Homo sapiens</name>
    <name type="common">Human</name>
    <dbReference type="NCBI Taxonomy" id="9606"/>
    <lineage>
        <taxon>Eukaryota</taxon>
        <taxon>Metazoa</taxon>
        <taxon>Chordata</taxon>
        <taxon>Craniata</taxon>
        <taxon>Vertebrata</taxon>
        <taxon>Euteleostomi</taxon>
        <taxon>Mammalia</taxon>
        <taxon>Eutheria</taxon>
        <taxon>Euarchontoglires</taxon>
        <taxon>Primates</taxon>
        <taxon>Haplorrhini</taxon>
        <taxon>Catarrhini</taxon>
        <taxon>Hominidae</taxon>
        <taxon>Homo</taxon>
    </lineage>
</organism>